<protein>
    <recommendedName>
        <fullName evidence="1">Anthranilate phosphoribosyltransferase</fullName>
        <ecNumber evidence="1">2.4.2.18</ecNumber>
    </recommendedName>
</protein>
<dbReference type="EC" id="2.4.2.18" evidence="1"/>
<dbReference type="EMBL" id="M83788">
    <property type="protein sequence ID" value="AAA73175.1"/>
    <property type="molecule type" value="Genomic_DNA"/>
</dbReference>
<dbReference type="EMBL" id="CP001956">
    <property type="protein sequence ID" value="ADE04074.1"/>
    <property type="molecule type" value="Genomic_DNA"/>
</dbReference>
<dbReference type="RefSeq" id="WP_004042371.1">
    <property type="nucleotide sequence ID" value="NC_013967.1"/>
</dbReference>
<dbReference type="SMR" id="P52562"/>
<dbReference type="STRING" id="309800.HVO_2456"/>
<dbReference type="PaxDb" id="309800-C498_07580"/>
<dbReference type="EnsemblBacteria" id="ADE04074">
    <property type="protein sequence ID" value="ADE04074"/>
    <property type="gene ID" value="HVO_2456"/>
</dbReference>
<dbReference type="GeneID" id="8926352"/>
<dbReference type="KEGG" id="hvo:HVO_2456"/>
<dbReference type="eggNOG" id="arCOG02012">
    <property type="taxonomic scope" value="Archaea"/>
</dbReference>
<dbReference type="HOGENOM" id="CLU_034315_2_1_2"/>
<dbReference type="OrthoDB" id="8214at2157"/>
<dbReference type="UniPathway" id="UPA00035">
    <property type="reaction ID" value="UER00041"/>
</dbReference>
<dbReference type="Proteomes" id="UP000008243">
    <property type="component" value="Chromosome"/>
</dbReference>
<dbReference type="GO" id="GO:0005829">
    <property type="term" value="C:cytosol"/>
    <property type="evidence" value="ECO:0007669"/>
    <property type="project" value="TreeGrafter"/>
</dbReference>
<dbReference type="GO" id="GO:0004048">
    <property type="term" value="F:anthranilate phosphoribosyltransferase activity"/>
    <property type="evidence" value="ECO:0007669"/>
    <property type="project" value="UniProtKB-UniRule"/>
</dbReference>
<dbReference type="GO" id="GO:0000287">
    <property type="term" value="F:magnesium ion binding"/>
    <property type="evidence" value="ECO:0007669"/>
    <property type="project" value="UniProtKB-UniRule"/>
</dbReference>
<dbReference type="GO" id="GO:0000162">
    <property type="term" value="P:L-tryptophan biosynthetic process"/>
    <property type="evidence" value="ECO:0007669"/>
    <property type="project" value="UniProtKB-UniRule"/>
</dbReference>
<dbReference type="FunFam" id="3.40.1030.10:FF:000002">
    <property type="entry name" value="Anthranilate phosphoribosyltransferase"/>
    <property type="match status" value="1"/>
</dbReference>
<dbReference type="Gene3D" id="3.40.1030.10">
    <property type="entry name" value="Nucleoside phosphorylase/phosphoribosyltransferase catalytic domain"/>
    <property type="match status" value="1"/>
</dbReference>
<dbReference type="Gene3D" id="1.20.970.10">
    <property type="entry name" value="Transferase, Pyrimidine Nucleoside Phosphorylase, Chain C"/>
    <property type="match status" value="1"/>
</dbReference>
<dbReference type="HAMAP" id="MF_00211">
    <property type="entry name" value="TrpD"/>
    <property type="match status" value="1"/>
</dbReference>
<dbReference type="InterPro" id="IPR005940">
    <property type="entry name" value="Anthranilate_Pribosyl_Tfrase"/>
</dbReference>
<dbReference type="InterPro" id="IPR000312">
    <property type="entry name" value="Glycosyl_Trfase_fam3"/>
</dbReference>
<dbReference type="InterPro" id="IPR017459">
    <property type="entry name" value="Glycosyl_Trfase_fam3_N_dom"/>
</dbReference>
<dbReference type="InterPro" id="IPR036320">
    <property type="entry name" value="Glycosyl_Trfase_fam3_N_dom_sf"/>
</dbReference>
<dbReference type="InterPro" id="IPR035902">
    <property type="entry name" value="Nuc_phospho_transferase"/>
</dbReference>
<dbReference type="NCBIfam" id="TIGR01245">
    <property type="entry name" value="trpD"/>
    <property type="match status" value="1"/>
</dbReference>
<dbReference type="PANTHER" id="PTHR43285">
    <property type="entry name" value="ANTHRANILATE PHOSPHORIBOSYLTRANSFERASE"/>
    <property type="match status" value="1"/>
</dbReference>
<dbReference type="PANTHER" id="PTHR43285:SF2">
    <property type="entry name" value="ANTHRANILATE PHOSPHORIBOSYLTRANSFERASE"/>
    <property type="match status" value="1"/>
</dbReference>
<dbReference type="Pfam" id="PF02885">
    <property type="entry name" value="Glycos_trans_3N"/>
    <property type="match status" value="1"/>
</dbReference>
<dbReference type="Pfam" id="PF00591">
    <property type="entry name" value="Glycos_transf_3"/>
    <property type="match status" value="1"/>
</dbReference>
<dbReference type="SUPFAM" id="SSF52418">
    <property type="entry name" value="Nucleoside phosphorylase/phosphoribosyltransferase catalytic domain"/>
    <property type="match status" value="1"/>
</dbReference>
<dbReference type="SUPFAM" id="SSF47648">
    <property type="entry name" value="Nucleoside phosphorylase/phosphoribosyltransferase N-terminal domain"/>
    <property type="match status" value="1"/>
</dbReference>
<proteinExistence type="inferred from homology"/>
<comment type="function">
    <text evidence="1">Catalyzes the transfer of the phosphoribosyl group of 5-phosphorylribose-1-pyrophosphate (PRPP) to anthranilate to yield N-(5'-phosphoribosyl)-anthranilate (PRA).</text>
</comment>
<comment type="catalytic activity">
    <reaction evidence="1">
        <text>N-(5-phospho-beta-D-ribosyl)anthranilate + diphosphate = 5-phospho-alpha-D-ribose 1-diphosphate + anthranilate</text>
        <dbReference type="Rhea" id="RHEA:11768"/>
        <dbReference type="ChEBI" id="CHEBI:16567"/>
        <dbReference type="ChEBI" id="CHEBI:18277"/>
        <dbReference type="ChEBI" id="CHEBI:33019"/>
        <dbReference type="ChEBI" id="CHEBI:58017"/>
        <dbReference type="EC" id="2.4.2.18"/>
    </reaction>
</comment>
<comment type="cofactor">
    <cofactor evidence="1">
        <name>Mg(2+)</name>
        <dbReference type="ChEBI" id="CHEBI:18420"/>
    </cofactor>
    <text evidence="1">Binds 2 magnesium ions per monomer.</text>
</comment>
<comment type="pathway">
    <text evidence="1">Amino-acid biosynthesis; L-tryptophan biosynthesis; L-tryptophan from chorismate: step 2/5.</text>
</comment>
<comment type="subunit">
    <text evidence="1">Homodimer.</text>
</comment>
<comment type="similarity">
    <text evidence="1">Belongs to the anthranilate phosphoribosyltransferase family.</text>
</comment>
<organism>
    <name type="scientific">Haloferax volcanii (strain ATCC 29605 / DSM 3757 / JCM 8879 / NBRC 14742 / NCIMB 2012 / VKM B-1768 / DS2)</name>
    <name type="common">Halobacterium volcanii</name>
    <dbReference type="NCBI Taxonomy" id="309800"/>
    <lineage>
        <taxon>Archaea</taxon>
        <taxon>Methanobacteriati</taxon>
        <taxon>Methanobacteriota</taxon>
        <taxon>Stenosarchaea group</taxon>
        <taxon>Halobacteria</taxon>
        <taxon>Halobacteriales</taxon>
        <taxon>Haloferacaceae</taxon>
        <taxon>Haloferax</taxon>
    </lineage>
</organism>
<name>TRPD_HALVD</name>
<evidence type="ECO:0000255" key="1">
    <source>
        <dbReference type="HAMAP-Rule" id="MF_00211"/>
    </source>
</evidence>
<evidence type="ECO:0000305" key="2"/>
<gene>
    <name evidence="1" type="primary">trpD</name>
    <name type="synonym">trpD1</name>
    <name type="ordered locus">HVO_2456</name>
</gene>
<reference key="1">
    <citation type="journal article" date="1992" name="J. Bacteriol.">
        <title>Genes for tryptophan biosynthesis in the halophilic archaebacterium Haloferax volcanii: the trpDFEG cluster.</title>
        <authorList>
            <person name="Lam W.L."/>
            <person name="Logan S.M."/>
            <person name="Doolittle W.F."/>
        </authorList>
    </citation>
    <scope>NUCLEOTIDE SEQUENCE [GENOMIC DNA]</scope>
    <source>
        <strain>DS2 / DSM 5716 / WFD11</strain>
    </source>
</reference>
<reference key="2">
    <citation type="journal article" date="2010" name="PLoS ONE">
        <title>The complete genome sequence of Haloferax volcanii DS2, a model archaeon.</title>
        <authorList>
            <person name="Hartman A.L."/>
            <person name="Norais C."/>
            <person name="Badger J.H."/>
            <person name="Delmas S."/>
            <person name="Haldenby S."/>
            <person name="Madupu R."/>
            <person name="Robinson J."/>
            <person name="Khouri H."/>
            <person name="Ren Q."/>
            <person name="Lowe T.M."/>
            <person name="Maupin-Furlow J."/>
            <person name="Pohlschroder M."/>
            <person name="Daniels C."/>
            <person name="Pfeiffer F."/>
            <person name="Allers T."/>
            <person name="Eisen J.A."/>
        </authorList>
    </citation>
    <scope>NUCLEOTIDE SEQUENCE [LARGE SCALE GENOMIC DNA]</scope>
    <source>
        <strain>ATCC 29605 / DSM 3757 / JCM 8879 / NBRC 14742 / NCIMB 2012 / VKM B-1768 / DS2</strain>
    </source>
</reference>
<accession>P52562</accession>
<accession>D4GT43</accession>
<feature type="chain" id="PRO_0000154510" description="Anthranilate phosphoribosyltransferase">
    <location>
        <begin position="1"/>
        <end position="331"/>
    </location>
</feature>
<feature type="binding site" evidence="1">
    <location>
        <position position="78"/>
    </location>
    <ligand>
        <name>5-phospho-alpha-D-ribose 1-diphosphate</name>
        <dbReference type="ChEBI" id="CHEBI:58017"/>
    </ligand>
</feature>
<feature type="binding site" evidence="1">
    <location>
        <position position="78"/>
    </location>
    <ligand>
        <name>anthranilate</name>
        <dbReference type="ChEBI" id="CHEBI:16567"/>
        <label>1</label>
    </ligand>
</feature>
<feature type="binding site" evidence="1">
    <location>
        <begin position="81"/>
        <end position="82"/>
    </location>
    <ligand>
        <name>5-phospho-alpha-D-ribose 1-diphosphate</name>
        <dbReference type="ChEBI" id="CHEBI:58017"/>
    </ligand>
</feature>
<feature type="binding site" evidence="1">
    <location>
        <position position="86"/>
    </location>
    <ligand>
        <name>5-phospho-alpha-D-ribose 1-diphosphate</name>
        <dbReference type="ChEBI" id="CHEBI:58017"/>
    </ligand>
</feature>
<feature type="binding site" evidence="1">
    <location>
        <begin position="88"/>
        <end position="91"/>
    </location>
    <ligand>
        <name>5-phospho-alpha-D-ribose 1-diphosphate</name>
        <dbReference type="ChEBI" id="CHEBI:58017"/>
    </ligand>
</feature>
<feature type="binding site" evidence="1">
    <location>
        <position position="90"/>
    </location>
    <ligand>
        <name>Mg(2+)</name>
        <dbReference type="ChEBI" id="CHEBI:18420"/>
        <label>1</label>
    </ligand>
</feature>
<feature type="binding site" evidence="1">
    <location>
        <begin position="106"/>
        <end position="114"/>
    </location>
    <ligand>
        <name>5-phospho-alpha-D-ribose 1-diphosphate</name>
        <dbReference type="ChEBI" id="CHEBI:58017"/>
    </ligand>
</feature>
<feature type="binding site" evidence="1">
    <location>
        <position position="109"/>
    </location>
    <ligand>
        <name>anthranilate</name>
        <dbReference type="ChEBI" id="CHEBI:16567"/>
        <label>1</label>
    </ligand>
</feature>
<feature type="binding site" evidence="1">
    <location>
        <position position="118"/>
    </location>
    <ligand>
        <name>5-phospho-alpha-D-ribose 1-diphosphate</name>
        <dbReference type="ChEBI" id="CHEBI:58017"/>
    </ligand>
</feature>
<feature type="binding site" evidence="1">
    <location>
        <position position="164"/>
    </location>
    <ligand>
        <name>anthranilate</name>
        <dbReference type="ChEBI" id="CHEBI:16567"/>
        <label>2</label>
    </ligand>
</feature>
<feature type="binding site" evidence="1">
    <location>
        <position position="222"/>
    </location>
    <ligand>
        <name>Mg(2+)</name>
        <dbReference type="ChEBI" id="CHEBI:18420"/>
        <label>2</label>
    </ligand>
</feature>
<feature type="binding site" evidence="1">
    <location>
        <position position="223"/>
    </location>
    <ligand>
        <name>Mg(2+)</name>
        <dbReference type="ChEBI" id="CHEBI:18420"/>
        <label>1</label>
    </ligand>
</feature>
<feature type="binding site" evidence="1">
    <location>
        <position position="223"/>
    </location>
    <ligand>
        <name>Mg(2+)</name>
        <dbReference type="ChEBI" id="CHEBI:18420"/>
        <label>2</label>
    </ligand>
</feature>
<feature type="sequence conflict" description="In Ref. 1; AAA73175." evidence="2" ref="1">
    <original>DAARAVF</original>
    <variation>RPPRGRSS</variation>
    <location>
        <begin position="21"/>
        <end position="27"/>
    </location>
</feature>
<feature type="sequence conflict" description="In Ref. 1; AAA73175." evidence="2" ref="1">
    <original>TIEPDRGPLVDTC</original>
    <variation>IHRARPAARSSDTA</variation>
    <location>
        <begin position="65"/>
        <end position="77"/>
    </location>
</feature>
<feature type="sequence conflict" description="In Ref. 1; AAA73175." evidence="2" ref="1">
    <original>STTSALVAAGAG</original>
    <variation>LDPTTRSSAAAPGA</variation>
    <location>
        <begin position="90"/>
        <end position="101"/>
    </location>
</feature>
<feature type="sequence conflict" description="In Ref. 1; AAA73175." evidence="2" ref="1">
    <original>A</original>
    <variation>R</variation>
    <location>
        <position position="229"/>
    </location>
</feature>
<feature type="sequence conflict" description="In Ref. 1; AAA73175." evidence="2" ref="1">
    <original>I</original>
    <variation>M</variation>
    <location>
        <position position="296"/>
    </location>
</feature>
<feature type="sequence conflict" description="In Ref. 1; AAA73175." evidence="2" ref="1">
    <original>REA</original>
    <variation>PGG</variation>
    <location>
        <begin position="329"/>
        <end position="331"/>
    </location>
</feature>
<keyword id="KW-0028">Amino-acid biosynthesis</keyword>
<keyword id="KW-0057">Aromatic amino acid biosynthesis</keyword>
<keyword id="KW-0328">Glycosyltransferase</keyword>
<keyword id="KW-0460">Magnesium</keyword>
<keyword id="KW-0479">Metal-binding</keyword>
<keyword id="KW-1185">Reference proteome</keyword>
<keyword id="KW-0808">Transferase</keyword>
<keyword id="KW-0822">Tryptophan biosynthesis</keyword>
<sequence>MQDYIERVTGGADLTVEEARDAARAVFEDATEAQIGALLAALRAKGETEAEIAGFAQGMRDAALTIEPDRGPLVDTCGTGGDDYNTINVSTTSALVAAGAGAAVAKHGNYSVSSSSGSADVLEVAGVNVEAEPESVEACIEDNGVGFMLAPVFHPAMKAVIGPRKELGMRTVFNVLGPLTNPAGADAQVLGVYDADLVPVIAESLSHMPVERALVVHGSGMDEIALHDATTVAEIDGDEITEYTLTPADLGLERAPIEAVAGGTPQENADDLEGILTGDVTGPKRDLILANAGAAIYVAGLADSLEGGVEVARDAIDSGAAKAKHDALREA</sequence>